<sequence length="340" mass="39661">MLNKKIKKNHKEDWITELTNAITNPDELLRTLNLKSNTKYFKNIQVQKLFSLRVPKTFVSRMKKNDPFDPLLLQILPHTKELKNNHNFVQDPLEETKNVIIPGLIRKYNNRILLLLKTNCAINCRYCFRRYFPYSQHPGNKENLNLAIQYIKNQTDLNEVILSGGDPLMAKDHEIQWIVNTLSNIYHIKRLRIHTRLPIVIPSRITNNLCKILSTTRLKILIVTHINHAQEINHELQYNINKLHKLGITLLNQSVLLRGINDNAKILSQLSNKLFDINILPYYLHILDKVKSTTHFYVSEKQASIIVVELLSMISGFLVPKLVCEHPGKNSKIYINLNMK</sequence>
<keyword id="KW-0004">4Fe-4S</keyword>
<keyword id="KW-0408">Iron</keyword>
<keyword id="KW-0411">Iron-sulfur</keyword>
<keyword id="KW-0413">Isomerase</keyword>
<keyword id="KW-0479">Metal-binding</keyword>
<keyword id="KW-0663">Pyridoxal phosphate</keyword>
<keyword id="KW-1185">Reference proteome</keyword>
<keyword id="KW-0949">S-adenosyl-L-methionine</keyword>
<gene>
    <name type="primary">epmB</name>
    <name type="ordered locus">bbp_022</name>
</gene>
<protein>
    <recommendedName>
        <fullName>L-lysine 2,3-aminomutase</fullName>
        <shortName>LAM</shortName>
        <ecNumber>5.4.3.-</ecNumber>
    </recommendedName>
    <alternativeName>
        <fullName>EF-P post-translational modification enzyme B</fullName>
    </alternativeName>
</protein>
<dbReference type="EC" id="5.4.3.-"/>
<dbReference type="EMBL" id="AE016826">
    <property type="protein sequence ID" value="AAO26765.1"/>
    <property type="molecule type" value="Genomic_DNA"/>
</dbReference>
<dbReference type="RefSeq" id="WP_011091166.1">
    <property type="nucleotide sequence ID" value="NC_004545.1"/>
</dbReference>
<dbReference type="SMR" id="Q89B32"/>
<dbReference type="STRING" id="224915.bbp_022"/>
<dbReference type="KEGG" id="bab:bbp_022"/>
<dbReference type="eggNOG" id="COG1509">
    <property type="taxonomic scope" value="Bacteria"/>
</dbReference>
<dbReference type="HOGENOM" id="CLU_032161_2_0_6"/>
<dbReference type="OrthoDB" id="9770937at2"/>
<dbReference type="Proteomes" id="UP000000601">
    <property type="component" value="Chromosome"/>
</dbReference>
<dbReference type="GO" id="GO:0051539">
    <property type="term" value="F:4 iron, 4 sulfur cluster binding"/>
    <property type="evidence" value="ECO:0007669"/>
    <property type="project" value="UniProtKB-KW"/>
</dbReference>
<dbReference type="GO" id="GO:0016853">
    <property type="term" value="F:isomerase activity"/>
    <property type="evidence" value="ECO:0007669"/>
    <property type="project" value="UniProtKB-KW"/>
</dbReference>
<dbReference type="GO" id="GO:0046872">
    <property type="term" value="F:metal ion binding"/>
    <property type="evidence" value="ECO:0007669"/>
    <property type="project" value="UniProtKB-KW"/>
</dbReference>
<dbReference type="Gene3D" id="3.20.20.70">
    <property type="entry name" value="Aldolase class I"/>
    <property type="match status" value="1"/>
</dbReference>
<dbReference type="InterPro" id="IPR013785">
    <property type="entry name" value="Aldolase_TIM"/>
</dbReference>
<dbReference type="InterPro" id="IPR022462">
    <property type="entry name" value="EpmB"/>
</dbReference>
<dbReference type="InterPro" id="IPR003739">
    <property type="entry name" value="Lys_aminomutase/Glu_NH3_mut"/>
</dbReference>
<dbReference type="InterPro" id="IPR007197">
    <property type="entry name" value="rSAM"/>
</dbReference>
<dbReference type="NCBIfam" id="TIGR03821">
    <property type="entry name" value="EFP_modif_epmB"/>
    <property type="match status" value="1"/>
</dbReference>
<dbReference type="NCBIfam" id="TIGR00238">
    <property type="entry name" value="KamA family radical SAM protein"/>
    <property type="match status" value="1"/>
</dbReference>
<dbReference type="PANTHER" id="PTHR30538:SF1">
    <property type="entry name" value="L-LYSINE 2,3-AMINOMUTASE"/>
    <property type="match status" value="1"/>
</dbReference>
<dbReference type="PANTHER" id="PTHR30538">
    <property type="entry name" value="LYSINE 2,3-AMINOMUTASE-RELATED"/>
    <property type="match status" value="1"/>
</dbReference>
<dbReference type="Pfam" id="PF13353">
    <property type="entry name" value="Fer4_12"/>
    <property type="match status" value="1"/>
</dbReference>
<dbReference type="PIRSF" id="PIRSF004911">
    <property type="entry name" value="DUF160"/>
    <property type="match status" value="1"/>
</dbReference>
<dbReference type="SFLD" id="SFLDF00314">
    <property type="entry name" value="L-lysine_2_3-aminomutase_(yjeK"/>
    <property type="match status" value="1"/>
</dbReference>
<dbReference type="SFLD" id="SFLDG01070">
    <property type="entry name" value="PLP-dependent"/>
    <property type="match status" value="1"/>
</dbReference>
<dbReference type="SUPFAM" id="SSF102114">
    <property type="entry name" value="Radical SAM enzymes"/>
    <property type="match status" value="1"/>
</dbReference>
<dbReference type="PROSITE" id="PS51918">
    <property type="entry name" value="RADICAL_SAM"/>
    <property type="match status" value="1"/>
</dbReference>
<name>EPMB_BUCBP</name>
<reference key="1">
    <citation type="journal article" date="2003" name="Proc. Natl. Acad. Sci. U.S.A.">
        <title>Reductive genome evolution in Buchnera aphidicola.</title>
        <authorList>
            <person name="van Ham R.C.H.J."/>
            <person name="Kamerbeek J."/>
            <person name="Palacios C."/>
            <person name="Rausell C."/>
            <person name="Abascal F."/>
            <person name="Bastolla U."/>
            <person name="Fernandez J.M."/>
            <person name="Jimenez L."/>
            <person name="Postigo M."/>
            <person name="Silva F.J."/>
            <person name="Tamames J."/>
            <person name="Viguera E."/>
            <person name="Latorre A."/>
            <person name="Valencia A."/>
            <person name="Moran F."/>
            <person name="Moya A."/>
        </authorList>
    </citation>
    <scope>NUCLEOTIDE SEQUENCE [LARGE SCALE GENOMIC DNA]</scope>
    <source>
        <strain>Bp</strain>
    </source>
</reference>
<comment type="function">
    <text evidence="1">With EpmA is involved in the beta-lysylation step of the post-translational modification of translation elongation factor P (EF-P) on 'Lys-34'. EpmB appears to act before EpmA. Displays lysine 2,3-aminomutase activity, producing (R)-beta-lysine from (S)-alpha-lysine (L-lysine) (By similarity).</text>
</comment>
<comment type="catalytic activity">
    <reaction>
        <text>L-lysine = D-beta-lysine</text>
        <dbReference type="Rhea" id="RHEA:44148"/>
        <dbReference type="ChEBI" id="CHEBI:32551"/>
        <dbReference type="ChEBI" id="CHEBI:84138"/>
    </reaction>
</comment>
<comment type="cofactor">
    <cofactor evidence="1">
        <name>[4Fe-4S] cluster</name>
        <dbReference type="ChEBI" id="CHEBI:49883"/>
    </cofactor>
    <text evidence="1">Binds 1 [4Fe-4S] cluster. The cluster is coordinated with 3 cysteines and an exchangeable S-adenosyl-L-methionine.</text>
</comment>
<comment type="cofactor">
    <cofactor evidence="1">
        <name>pyridoxal 5'-phosphate</name>
        <dbReference type="ChEBI" id="CHEBI:597326"/>
    </cofactor>
</comment>
<comment type="similarity">
    <text evidence="4">Belongs to the radical SAM superfamily. KamA family.</text>
</comment>
<feature type="chain" id="PRO_0000172293" description="L-lysine 2,3-aminomutase">
    <location>
        <begin position="1"/>
        <end position="340"/>
    </location>
</feature>
<feature type="domain" description="Radical SAM core" evidence="3">
    <location>
        <begin position="106"/>
        <end position="321"/>
    </location>
</feature>
<feature type="binding site" evidence="2">
    <location>
        <position position="120"/>
    </location>
    <ligand>
        <name>[4Fe-4S] cluster</name>
        <dbReference type="ChEBI" id="CHEBI:49883"/>
        <note>4Fe-4S-S-AdoMet</note>
    </ligand>
</feature>
<feature type="binding site" evidence="2">
    <location>
        <position position="124"/>
    </location>
    <ligand>
        <name>[4Fe-4S] cluster</name>
        <dbReference type="ChEBI" id="CHEBI:49883"/>
        <note>4Fe-4S-S-AdoMet</note>
    </ligand>
</feature>
<feature type="binding site" evidence="2">
    <location>
        <position position="127"/>
    </location>
    <ligand>
        <name>[4Fe-4S] cluster</name>
        <dbReference type="ChEBI" id="CHEBI:49883"/>
        <note>4Fe-4S-S-AdoMet</note>
    </ligand>
</feature>
<feature type="modified residue" description="N6-(pyridoxal phosphate)lysine" evidence="1">
    <location>
        <position position="332"/>
    </location>
</feature>
<proteinExistence type="inferred from homology"/>
<evidence type="ECO:0000250" key="1"/>
<evidence type="ECO:0000255" key="2"/>
<evidence type="ECO:0000255" key="3">
    <source>
        <dbReference type="PROSITE-ProRule" id="PRU01266"/>
    </source>
</evidence>
<evidence type="ECO:0000305" key="4"/>
<accession>Q89B32</accession>
<organism>
    <name type="scientific">Buchnera aphidicola subsp. Baizongia pistaciae (strain Bp)</name>
    <dbReference type="NCBI Taxonomy" id="224915"/>
    <lineage>
        <taxon>Bacteria</taxon>
        <taxon>Pseudomonadati</taxon>
        <taxon>Pseudomonadota</taxon>
        <taxon>Gammaproteobacteria</taxon>
        <taxon>Enterobacterales</taxon>
        <taxon>Erwiniaceae</taxon>
        <taxon>Buchnera</taxon>
    </lineage>
</organism>